<feature type="chain" id="PRO_0000093169" description="Uncharacterized amino-acid ABC transporter ATP-binding protein YhdZ">
    <location>
        <begin position="1"/>
        <end position="252"/>
    </location>
</feature>
<feature type="domain" description="ABC transporter" evidence="1">
    <location>
        <begin position="13"/>
        <end position="247"/>
    </location>
</feature>
<feature type="binding site" evidence="1">
    <location>
        <begin position="45"/>
        <end position="52"/>
    </location>
    <ligand>
        <name>ATP</name>
        <dbReference type="ChEBI" id="CHEBI:30616"/>
    </ligand>
</feature>
<comment type="function">
    <text>Probably part of a binding-protein-dependent transport system YdhWXYZ for an amino acid. Probably responsible for energy coupling to the transport system.</text>
</comment>
<comment type="subcellular location">
    <subcellularLocation>
        <location evidence="2">Cell inner membrane</location>
        <topology evidence="2">Peripheral membrane protein</topology>
    </subcellularLocation>
</comment>
<comment type="similarity">
    <text evidence="2">Belongs to the ABC transporter superfamily.</text>
</comment>
<organism>
    <name type="scientific">Escherichia coli (strain K12)</name>
    <dbReference type="NCBI Taxonomy" id="83333"/>
    <lineage>
        <taxon>Bacteria</taxon>
        <taxon>Pseudomonadati</taxon>
        <taxon>Pseudomonadota</taxon>
        <taxon>Gammaproteobacteria</taxon>
        <taxon>Enterobacterales</taxon>
        <taxon>Enterobacteriaceae</taxon>
        <taxon>Escherichia</taxon>
    </lineage>
</organism>
<protein>
    <recommendedName>
        <fullName>Uncharacterized amino-acid ABC transporter ATP-binding protein YhdZ</fullName>
    </recommendedName>
</protein>
<accession>P45769</accession>
<accession>Q2M8U4</accession>
<keyword id="KW-0029">Amino-acid transport</keyword>
<keyword id="KW-0067">ATP-binding</keyword>
<keyword id="KW-0997">Cell inner membrane</keyword>
<keyword id="KW-1003">Cell membrane</keyword>
<keyword id="KW-0472">Membrane</keyword>
<keyword id="KW-0547">Nucleotide-binding</keyword>
<keyword id="KW-1185">Reference proteome</keyword>
<keyword id="KW-0813">Transport</keyword>
<dbReference type="EMBL" id="U18997">
    <property type="protein sequence ID" value="AAA58075.1"/>
    <property type="molecule type" value="Genomic_DNA"/>
</dbReference>
<dbReference type="EMBL" id="U00096">
    <property type="protein sequence ID" value="AAC76303.1"/>
    <property type="molecule type" value="Genomic_DNA"/>
</dbReference>
<dbReference type="EMBL" id="AP009048">
    <property type="protein sequence ID" value="BAE77312.1"/>
    <property type="molecule type" value="Genomic_DNA"/>
</dbReference>
<dbReference type="PIR" id="A65120">
    <property type="entry name" value="A65120"/>
</dbReference>
<dbReference type="RefSeq" id="NP_417737.1">
    <property type="nucleotide sequence ID" value="NC_000913.3"/>
</dbReference>
<dbReference type="RefSeq" id="WP_000078349.1">
    <property type="nucleotide sequence ID" value="NZ_SSZK01000072.1"/>
</dbReference>
<dbReference type="SMR" id="P45769"/>
<dbReference type="BioGRID" id="4262453">
    <property type="interactions" value="61"/>
</dbReference>
<dbReference type="ComplexPortal" id="CPX-4450">
    <property type="entry name" value="Putative amino acid ABC transporter complex"/>
</dbReference>
<dbReference type="FunCoup" id="P45769">
    <property type="interactions" value="339"/>
</dbReference>
<dbReference type="IntAct" id="P45769">
    <property type="interactions" value="4"/>
</dbReference>
<dbReference type="STRING" id="511145.b3271"/>
<dbReference type="TCDB" id="3.A.1.3.26">
    <property type="family name" value="the atp-binding cassette (abc) superfamily"/>
</dbReference>
<dbReference type="PaxDb" id="511145-b3271"/>
<dbReference type="EnsemblBacteria" id="AAC76303">
    <property type="protein sequence ID" value="AAC76303"/>
    <property type="gene ID" value="b3271"/>
</dbReference>
<dbReference type="GeneID" id="947763"/>
<dbReference type="KEGG" id="ecj:JW3239"/>
<dbReference type="KEGG" id="eco:b3271"/>
<dbReference type="KEGG" id="ecoc:C3026_17795"/>
<dbReference type="PATRIC" id="fig|1411691.4.peg.3456"/>
<dbReference type="EchoBASE" id="EB2686"/>
<dbReference type="eggNOG" id="COG1126">
    <property type="taxonomic scope" value="Bacteria"/>
</dbReference>
<dbReference type="HOGENOM" id="CLU_000604_1_22_6"/>
<dbReference type="InParanoid" id="P45769"/>
<dbReference type="OMA" id="APIWVRR"/>
<dbReference type="OrthoDB" id="9802264at2"/>
<dbReference type="PhylomeDB" id="P45769"/>
<dbReference type="BioCyc" id="EcoCyc:YHDZ-MONOMER"/>
<dbReference type="PRO" id="PR:P45769"/>
<dbReference type="Proteomes" id="UP000000625">
    <property type="component" value="Chromosome"/>
</dbReference>
<dbReference type="GO" id="GO:0043190">
    <property type="term" value="C:ATP-binding cassette (ABC) transporter complex"/>
    <property type="evidence" value="ECO:0000305"/>
    <property type="project" value="EcoCyc"/>
</dbReference>
<dbReference type="GO" id="GO:0055052">
    <property type="term" value="C:ATP-binding cassette (ABC) transporter complex, substrate-binding subunit-containing"/>
    <property type="evidence" value="ECO:0000303"/>
    <property type="project" value="ComplexPortal"/>
</dbReference>
<dbReference type="GO" id="GO:0016020">
    <property type="term" value="C:membrane"/>
    <property type="evidence" value="ECO:0000303"/>
    <property type="project" value="ComplexPortal"/>
</dbReference>
<dbReference type="GO" id="GO:0015424">
    <property type="term" value="F:ABC-type amino acid transporter activity"/>
    <property type="evidence" value="ECO:0007669"/>
    <property type="project" value="InterPro"/>
</dbReference>
<dbReference type="GO" id="GO:0005524">
    <property type="term" value="F:ATP binding"/>
    <property type="evidence" value="ECO:0000255"/>
    <property type="project" value="EcoCyc"/>
</dbReference>
<dbReference type="GO" id="GO:0016887">
    <property type="term" value="F:ATP hydrolysis activity"/>
    <property type="evidence" value="ECO:0007669"/>
    <property type="project" value="InterPro"/>
</dbReference>
<dbReference type="GO" id="GO:0015833">
    <property type="term" value="P:peptide transport"/>
    <property type="evidence" value="ECO:0000303"/>
    <property type="project" value="ComplexPortal"/>
</dbReference>
<dbReference type="CDD" id="cd03262">
    <property type="entry name" value="ABC_HisP_GlnQ"/>
    <property type="match status" value="1"/>
</dbReference>
<dbReference type="FunFam" id="3.40.50.300:FF:000020">
    <property type="entry name" value="Amino acid ABC transporter ATP-binding component"/>
    <property type="match status" value="1"/>
</dbReference>
<dbReference type="Gene3D" id="3.40.50.300">
    <property type="entry name" value="P-loop containing nucleotide triphosphate hydrolases"/>
    <property type="match status" value="1"/>
</dbReference>
<dbReference type="InterPro" id="IPR003593">
    <property type="entry name" value="AAA+_ATPase"/>
</dbReference>
<dbReference type="InterPro" id="IPR030679">
    <property type="entry name" value="ABC_ATPase_HisP-typ"/>
</dbReference>
<dbReference type="InterPro" id="IPR003439">
    <property type="entry name" value="ABC_transporter-like_ATP-bd"/>
</dbReference>
<dbReference type="InterPro" id="IPR017871">
    <property type="entry name" value="ABC_transporter-like_CS"/>
</dbReference>
<dbReference type="InterPro" id="IPR050086">
    <property type="entry name" value="MetN_ABC_transporter-like"/>
</dbReference>
<dbReference type="InterPro" id="IPR027417">
    <property type="entry name" value="P-loop_NTPase"/>
</dbReference>
<dbReference type="PANTHER" id="PTHR43166">
    <property type="entry name" value="AMINO ACID IMPORT ATP-BINDING PROTEIN"/>
    <property type="match status" value="1"/>
</dbReference>
<dbReference type="PANTHER" id="PTHR43166:SF4">
    <property type="entry name" value="PHOSPHONATES IMPORT ATP-BINDING PROTEIN PHNC"/>
    <property type="match status" value="1"/>
</dbReference>
<dbReference type="Pfam" id="PF00005">
    <property type="entry name" value="ABC_tran"/>
    <property type="match status" value="1"/>
</dbReference>
<dbReference type="PIRSF" id="PIRSF039085">
    <property type="entry name" value="ABC_ATPase_HisP"/>
    <property type="match status" value="1"/>
</dbReference>
<dbReference type="SMART" id="SM00382">
    <property type="entry name" value="AAA"/>
    <property type="match status" value="1"/>
</dbReference>
<dbReference type="SUPFAM" id="SSF52540">
    <property type="entry name" value="P-loop containing nucleoside triphosphate hydrolases"/>
    <property type="match status" value="1"/>
</dbReference>
<dbReference type="PROSITE" id="PS00211">
    <property type="entry name" value="ABC_TRANSPORTER_1"/>
    <property type="match status" value="1"/>
</dbReference>
<dbReference type="PROSITE" id="PS50893">
    <property type="entry name" value="ABC_TRANSPORTER_2"/>
    <property type="match status" value="1"/>
</dbReference>
<proteinExistence type="inferred from homology"/>
<reference key="1">
    <citation type="journal article" date="1997" name="Science">
        <title>The complete genome sequence of Escherichia coli K-12.</title>
        <authorList>
            <person name="Blattner F.R."/>
            <person name="Plunkett G. III"/>
            <person name="Bloch C.A."/>
            <person name="Perna N.T."/>
            <person name="Burland V."/>
            <person name="Riley M."/>
            <person name="Collado-Vides J."/>
            <person name="Glasner J.D."/>
            <person name="Rode C.K."/>
            <person name="Mayhew G.F."/>
            <person name="Gregor J."/>
            <person name="Davis N.W."/>
            <person name="Kirkpatrick H.A."/>
            <person name="Goeden M.A."/>
            <person name="Rose D.J."/>
            <person name="Mau B."/>
            <person name="Shao Y."/>
        </authorList>
    </citation>
    <scope>NUCLEOTIDE SEQUENCE [LARGE SCALE GENOMIC DNA]</scope>
    <source>
        <strain>K12 / MG1655 / ATCC 47076</strain>
    </source>
</reference>
<reference key="2">
    <citation type="journal article" date="2006" name="Mol. Syst. Biol.">
        <title>Highly accurate genome sequences of Escherichia coli K-12 strains MG1655 and W3110.</title>
        <authorList>
            <person name="Hayashi K."/>
            <person name="Morooka N."/>
            <person name="Yamamoto Y."/>
            <person name="Fujita K."/>
            <person name="Isono K."/>
            <person name="Choi S."/>
            <person name="Ohtsubo E."/>
            <person name="Baba T."/>
            <person name="Wanner B.L."/>
            <person name="Mori H."/>
            <person name="Horiuchi T."/>
        </authorList>
    </citation>
    <scope>NUCLEOTIDE SEQUENCE [LARGE SCALE GENOMIC DNA]</scope>
    <source>
        <strain>K12 / W3110 / ATCC 27325 / DSM 5911</strain>
    </source>
</reference>
<evidence type="ECO:0000255" key="1">
    <source>
        <dbReference type="PROSITE-ProRule" id="PRU00434"/>
    </source>
</evidence>
<evidence type="ECO:0000305" key="2"/>
<gene>
    <name type="primary">yhdZ</name>
    <name type="ordered locus">b3271</name>
    <name type="ordered locus">JW3239</name>
</gene>
<sequence length="252" mass="28574">MSQILLQPANAMITLENVNKWYGQFHVLKNINLTVQPGERIVLCGPSGSGKSTTIRCINHLEEHQQGRIVVDGIELNEDIRNIERVRQEVGMVFQHFNLFPHLTVLQNCTLAPIWVRKMPKKEAEDLAVHYLERVRIAEHAHKFPGQISGGQQQRVAIARSLCMKPKIMLFDEPTSALDPEMVKEVLDTMIGLAQSGMTMLCVTHEMGFARTVADRVIFMDRGEIVEQAAPDEFFAHPKSERTRAFLSQVIH</sequence>
<name>YHDZ_ECOLI</name>